<sequence>MSLDAVWAPQTANIGDGPAKKASDQTSMQTQVLQTASLRDGPAKRAVWVRRDNAEKEEPVKSAVSKDRPRLEVTKAVVVDLGTGFCKCGFAGLPKPTHKISTTVGKPYMETAKTGDNRKETFVGRELFNPDIHLKLVNPLRHGIIVDWDTVQDIWEYLFRQEMKIAPEEHAVLVSDPPLSPHTNREKYAEMLFETFNTPAMHIAYQSRLSMYSYGRTSGLVVEVGHGVSYVVPIYEGYPLPSITGRLDYAGSDLTNYLMNLMNNCGKHFSEDHLSIVEDIKTKCCFVALDPIEEKKIPPSEHEIHYTLPDGKEIRLGQERFLCSEMFFKPSLIKSMQLGLHTQTVSCLNKCDIALKRDLMGNILLCGGSTMLRGFPNRLQKELSSMCPNDTPQVNVLPERDTAVWTGGSILASLQGFQPLWVHRLEYEEHGPFFLYRRCF</sequence>
<proteinExistence type="evidence at protein level"/>
<dbReference type="EMBL" id="BC082101">
    <property type="protein sequence ID" value="AAH82101.1"/>
    <property type="molecule type" value="mRNA"/>
</dbReference>
<dbReference type="RefSeq" id="NP_001011973.1">
    <property type="nucleotide sequence ID" value="NM_001011973.1"/>
</dbReference>
<dbReference type="RefSeq" id="XP_008761929.1">
    <property type="nucleotide sequence ID" value="XM_008763707.4"/>
</dbReference>
<dbReference type="RefSeq" id="XP_063143375.1">
    <property type="nucleotide sequence ID" value="XM_063287305.1"/>
</dbReference>
<dbReference type="SMR" id="Q641W9"/>
<dbReference type="FunCoup" id="Q641W9">
    <property type="interactions" value="3"/>
</dbReference>
<dbReference type="IntAct" id="Q641W9">
    <property type="interactions" value="1"/>
</dbReference>
<dbReference type="STRING" id="10116.ENSRNOP00000022395"/>
<dbReference type="PhosphoSitePlus" id="Q641W9"/>
<dbReference type="PaxDb" id="10116-ENSRNOP00000022395"/>
<dbReference type="Ensembl" id="ENSRNOT00000022395.6">
    <property type="protein sequence ID" value="ENSRNOP00000022395.4"/>
    <property type="gene ID" value="ENSRNOG00000016641.6"/>
</dbReference>
<dbReference type="GeneID" id="298017"/>
<dbReference type="KEGG" id="rno:298017"/>
<dbReference type="UCSC" id="RGD:1304697">
    <property type="organism name" value="rat"/>
</dbReference>
<dbReference type="AGR" id="RGD:1304697"/>
<dbReference type="CTD" id="10881"/>
<dbReference type="RGD" id="1304697">
    <property type="gene designation" value="Actl7a"/>
</dbReference>
<dbReference type="eggNOG" id="KOG0676">
    <property type="taxonomic scope" value="Eukaryota"/>
</dbReference>
<dbReference type="GeneTree" id="ENSGT00940000162158"/>
<dbReference type="HOGENOM" id="CLU_027965_0_2_1"/>
<dbReference type="InParanoid" id="Q641W9"/>
<dbReference type="OMA" id="DMWEYLF"/>
<dbReference type="OrthoDB" id="9925380at2759"/>
<dbReference type="PhylomeDB" id="Q641W9"/>
<dbReference type="TreeFam" id="TF354237"/>
<dbReference type="PRO" id="PR:Q641W9"/>
<dbReference type="Proteomes" id="UP000002494">
    <property type="component" value="Chromosome 5"/>
</dbReference>
<dbReference type="Bgee" id="ENSRNOG00000016641">
    <property type="expression patterns" value="Expressed in testis and 10 other cell types or tissues"/>
</dbReference>
<dbReference type="GO" id="GO:0001669">
    <property type="term" value="C:acrosomal vesicle"/>
    <property type="evidence" value="ECO:0000250"/>
    <property type="project" value="UniProtKB"/>
</dbReference>
<dbReference type="GO" id="GO:0005737">
    <property type="term" value="C:cytoplasm"/>
    <property type="evidence" value="ECO:0000250"/>
    <property type="project" value="UniProtKB"/>
</dbReference>
<dbReference type="GO" id="GO:0005856">
    <property type="term" value="C:cytoskeleton"/>
    <property type="evidence" value="ECO:0007669"/>
    <property type="project" value="UniProtKB-SubCell"/>
</dbReference>
<dbReference type="GO" id="GO:0005794">
    <property type="term" value="C:Golgi apparatus"/>
    <property type="evidence" value="ECO:0000266"/>
    <property type="project" value="RGD"/>
</dbReference>
<dbReference type="GO" id="GO:0001673">
    <property type="term" value="C:male germ cell nucleus"/>
    <property type="evidence" value="ECO:0000266"/>
    <property type="project" value="RGD"/>
</dbReference>
<dbReference type="GO" id="GO:0031514">
    <property type="term" value="C:motile cilium"/>
    <property type="evidence" value="ECO:0000266"/>
    <property type="project" value="RGD"/>
</dbReference>
<dbReference type="GO" id="GO:0005634">
    <property type="term" value="C:nucleus"/>
    <property type="evidence" value="ECO:0000250"/>
    <property type="project" value="UniProtKB"/>
</dbReference>
<dbReference type="GO" id="GO:0032991">
    <property type="term" value="C:protein-containing complex"/>
    <property type="evidence" value="ECO:0000314"/>
    <property type="project" value="UniProtKB"/>
</dbReference>
<dbReference type="GO" id="GO:0001675">
    <property type="term" value="P:acrosome assembly"/>
    <property type="evidence" value="ECO:0000250"/>
    <property type="project" value="UniProtKB"/>
</dbReference>
<dbReference type="GO" id="GO:0009566">
    <property type="term" value="P:fertilization"/>
    <property type="evidence" value="ECO:0000250"/>
    <property type="project" value="UniProtKB"/>
</dbReference>
<dbReference type="GO" id="GO:0007338">
    <property type="term" value="P:single fertilization"/>
    <property type="evidence" value="ECO:0007669"/>
    <property type="project" value="UniProtKB-KW"/>
</dbReference>
<dbReference type="GO" id="GO:0007286">
    <property type="term" value="P:spermatid development"/>
    <property type="evidence" value="ECO:0000250"/>
    <property type="project" value="UniProtKB"/>
</dbReference>
<dbReference type="CDD" id="cd10214">
    <property type="entry name" value="ASKHA_NBD_ACTL7"/>
    <property type="match status" value="1"/>
</dbReference>
<dbReference type="FunFam" id="3.90.640.10:FF:000007">
    <property type="entry name" value="Actin like 7B"/>
    <property type="match status" value="1"/>
</dbReference>
<dbReference type="FunFam" id="3.30.420.40:FF:000050">
    <property type="entry name" value="Actin, alpha skeletal muscle"/>
    <property type="match status" value="1"/>
</dbReference>
<dbReference type="Gene3D" id="3.30.420.40">
    <property type="match status" value="2"/>
</dbReference>
<dbReference type="Gene3D" id="3.90.640.10">
    <property type="entry name" value="Actin, Chain A, domain 4"/>
    <property type="match status" value="1"/>
</dbReference>
<dbReference type="InterPro" id="IPR004000">
    <property type="entry name" value="Actin"/>
</dbReference>
<dbReference type="InterPro" id="IPR031769">
    <property type="entry name" value="ACTL7A_N"/>
</dbReference>
<dbReference type="InterPro" id="IPR043129">
    <property type="entry name" value="ATPase_NBD"/>
</dbReference>
<dbReference type="PANTHER" id="PTHR11937">
    <property type="entry name" value="ACTIN"/>
    <property type="match status" value="1"/>
</dbReference>
<dbReference type="Pfam" id="PF00022">
    <property type="entry name" value="Actin"/>
    <property type="match status" value="1"/>
</dbReference>
<dbReference type="Pfam" id="PF16840">
    <property type="entry name" value="ACTL7A_N"/>
    <property type="match status" value="1"/>
</dbReference>
<dbReference type="PRINTS" id="PR00190">
    <property type="entry name" value="ACTIN"/>
</dbReference>
<dbReference type="SMART" id="SM00268">
    <property type="entry name" value="ACTIN"/>
    <property type="match status" value="1"/>
</dbReference>
<dbReference type="SUPFAM" id="SSF53067">
    <property type="entry name" value="Actin-like ATPase domain"/>
    <property type="match status" value="2"/>
</dbReference>
<evidence type="ECO:0000250" key="1">
    <source>
        <dbReference type="UniProtKB" id="Q9QY84"/>
    </source>
</evidence>
<evidence type="ECO:0000250" key="2">
    <source>
        <dbReference type="UniProtKB" id="Q9Y615"/>
    </source>
</evidence>
<evidence type="ECO:0000256" key="3">
    <source>
        <dbReference type="SAM" id="MobiDB-lite"/>
    </source>
</evidence>
<evidence type="ECO:0000269" key="4">
    <source>
    </source>
</evidence>
<evidence type="ECO:0000305" key="5"/>
<protein>
    <recommendedName>
        <fullName>Actin-like protein 7A</fullName>
    </recommendedName>
</protein>
<reference key="1">
    <citation type="journal article" date="2004" name="Genome Res.">
        <title>The status, quality, and expansion of the NIH full-length cDNA project: the Mammalian Gene Collection (MGC).</title>
        <authorList>
            <consortium name="The MGC Project Team"/>
        </authorList>
    </citation>
    <scope>NUCLEOTIDE SEQUENCE [LARGE SCALE MRNA]</scope>
    <source>
        <tissue>Testis</tissue>
    </source>
</reference>
<reference key="2">
    <citation type="journal article" date="2011" name="J. Biol. Chem.">
        <title>Molecular recognition of the Tes LIM2-3 domains by the actin-related protein Arp7A.</title>
        <authorList>
            <person name="Boeda B."/>
            <person name="Knowles P.P."/>
            <person name="Briggs D.C."/>
            <person name="Murray-Rust J."/>
            <person name="Soriano E."/>
            <person name="Garvalov B.K."/>
            <person name="McDonald N.Q."/>
            <person name="Way M."/>
        </authorList>
    </citation>
    <scope>INTERACTION WITH TES AND ENAH</scope>
    <scope>SUBCELLULAR LOCATION</scope>
    <scope>TISSUE SPECIFICITY</scope>
</reference>
<name>ACL7A_RAT</name>
<feature type="chain" id="PRO_0000282829" description="Actin-like protein 7A">
    <location>
        <begin position="1"/>
        <end position="440"/>
    </location>
</feature>
<feature type="region of interest" description="Disordered" evidence="3">
    <location>
        <begin position="1"/>
        <end position="27"/>
    </location>
</feature>
<feature type="region of interest" description="Required for interaction with TES" evidence="2">
    <location>
        <begin position="36"/>
        <end position="56"/>
    </location>
</feature>
<organism>
    <name type="scientific">Rattus norvegicus</name>
    <name type="common">Rat</name>
    <dbReference type="NCBI Taxonomy" id="10116"/>
    <lineage>
        <taxon>Eukaryota</taxon>
        <taxon>Metazoa</taxon>
        <taxon>Chordata</taxon>
        <taxon>Craniata</taxon>
        <taxon>Vertebrata</taxon>
        <taxon>Euteleostomi</taxon>
        <taxon>Mammalia</taxon>
        <taxon>Eutheria</taxon>
        <taxon>Euarchontoglires</taxon>
        <taxon>Glires</taxon>
        <taxon>Rodentia</taxon>
        <taxon>Myomorpha</taxon>
        <taxon>Muroidea</taxon>
        <taxon>Muridae</taxon>
        <taxon>Murinae</taxon>
        <taxon>Rattus</taxon>
    </lineage>
</organism>
<keyword id="KW-0963">Cytoplasm</keyword>
<keyword id="KW-0206">Cytoskeleton</keyword>
<keyword id="KW-0221">Differentiation</keyword>
<keyword id="KW-0278">Fertilization</keyword>
<keyword id="KW-0333">Golgi apparatus</keyword>
<keyword id="KW-0539">Nucleus</keyword>
<keyword id="KW-1185">Reference proteome</keyword>
<keyword id="KW-0744">Spermatogenesis</keyword>
<comment type="function">
    <text evidence="1">Essential for normal spermatogenesis and male fertility. Required for normal sperm head morphology, acroplaxome formation, acrosome attachment, and acrosome granule stability. May anchor and stabilize acrosomal adherence to the acroplaxome at least in part by facilitating the presence of F-actin in the subacrosomal space. May play an important role in formation and fusion of Golgi-derived vesicles during acrosome biogenesis.</text>
</comment>
<comment type="subunit">
    <text evidence="1 2 4">Interacts (via N-terminus) with TES (via LIM domain 2). Heterodimer with TES; the heterodimer interacts with ENAH to form a heterotrimer (PubMed:21278383). Interacts with ACTL9 (By similarity). Interacts with CYLC1; the interaction may be relevant for proper acrosome attachment to the nuclear envelope (By similarity).</text>
</comment>
<comment type="subcellular location">
    <subcellularLocation>
        <location evidence="1">Cytoplasm</location>
        <location evidence="1">Cytoskeleton</location>
    </subcellularLocation>
    <subcellularLocation>
        <location evidence="1">Golgi apparatus</location>
    </subcellularLocation>
    <subcellularLocation>
        <location evidence="4">Cytoplasm</location>
    </subcellularLocation>
    <subcellularLocation>
        <location evidence="1">Nucleus</location>
    </subcellularLocation>
    <text evidence="1">Detected at the Golgi apparatus during acrosome biogenesis. Detected at the subacrosomal layer in round spermatids. Detected in sperm head and tail.</text>
</comment>
<comment type="tissue specificity">
    <text evidence="4">Detected in testis. Detected at the acrosome of round spermatids (at protein level).</text>
</comment>
<comment type="similarity">
    <text evidence="5">Belongs to the actin family.</text>
</comment>
<accession>Q641W9</accession>
<gene>
    <name type="primary">Actl7a</name>
</gene>